<protein>
    <recommendedName>
        <fullName evidence="1">Chorismate synthase</fullName>
        <shortName evidence="1">CS</shortName>
        <ecNumber evidence="1">4.2.3.5</ecNumber>
    </recommendedName>
    <alternativeName>
        <fullName evidence="1">5-enolpyruvylshikimate-3-phosphate phospholyase</fullName>
    </alternativeName>
</protein>
<proteinExistence type="inferred from homology"/>
<name>AROC_GRABC</name>
<reference key="1">
    <citation type="journal article" date="2007" name="J. Bacteriol.">
        <title>Genome sequence analysis of the emerging human pathogenic acetic acid bacterium Granulibacter bethesdensis.</title>
        <authorList>
            <person name="Greenberg D.E."/>
            <person name="Porcella S.F."/>
            <person name="Zelazny A.M."/>
            <person name="Virtaneva K."/>
            <person name="Sturdevant D.E."/>
            <person name="Kupko J.J. III"/>
            <person name="Barbian K.D."/>
            <person name="Babar A."/>
            <person name="Dorward D.W."/>
            <person name="Holland S.M."/>
        </authorList>
    </citation>
    <scope>NUCLEOTIDE SEQUENCE [LARGE SCALE GENOMIC DNA]</scope>
    <source>
        <strain>ATCC BAA-1260 / CGDNIH1</strain>
    </source>
</reference>
<comment type="function">
    <text evidence="1">Catalyzes the anti-1,4-elimination of the C-3 phosphate and the C-6 proR hydrogen from 5-enolpyruvylshikimate-3-phosphate (EPSP) to yield chorismate, which is the branch point compound that serves as the starting substrate for the three terminal pathways of aromatic amino acid biosynthesis. This reaction introduces a second double bond into the aromatic ring system.</text>
</comment>
<comment type="catalytic activity">
    <reaction evidence="1">
        <text>5-O-(1-carboxyvinyl)-3-phosphoshikimate = chorismate + phosphate</text>
        <dbReference type="Rhea" id="RHEA:21020"/>
        <dbReference type="ChEBI" id="CHEBI:29748"/>
        <dbReference type="ChEBI" id="CHEBI:43474"/>
        <dbReference type="ChEBI" id="CHEBI:57701"/>
        <dbReference type="EC" id="4.2.3.5"/>
    </reaction>
</comment>
<comment type="cofactor">
    <cofactor evidence="1">
        <name>FMNH2</name>
        <dbReference type="ChEBI" id="CHEBI:57618"/>
    </cofactor>
    <text evidence="1">Reduced FMN (FMNH(2)).</text>
</comment>
<comment type="pathway">
    <text evidence="1">Metabolic intermediate biosynthesis; chorismate biosynthesis; chorismate from D-erythrose 4-phosphate and phosphoenolpyruvate: step 7/7.</text>
</comment>
<comment type="subunit">
    <text evidence="1">Homotetramer.</text>
</comment>
<comment type="similarity">
    <text evidence="1">Belongs to the chorismate synthase family.</text>
</comment>
<comment type="sequence caution" evidence="2">
    <conflict type="erroneous initiation">
        <sequence resource="EMBL-CDS" id="ABI61122"/>
    </conflict>
    <text>Extended N-terminus.</text>
</comment>
<evidence type="ECO:0000255" key="1">
    <source>
        <dbReference type="HAMAP-Rule" id="MF_00300"/>
    </source>
</evidence>
<evidence type="ECO:0000305" key="2"/>
<accession>Q0BVN0</accession>
<sequence>MSHNSFGHLFRVTTWGESHGPAIGCVVDGCPPGIPLTEADIQPALDRRRPGQSRFTTQRREADQVRILSGTFEGVTTGTPIALEIQNTDQRSKDYGDIAQRYRPGHADLTYDLKYGIRDYRGGGRSSARETACRVAAGEVARKILGAGITIRAALVRIGPHGIDRSRWDWSQIEANPFFCPDPVAAEQWAVYLDEIRKRGSSVGAVVEVIAEGVPAGLGAPLYGKLDSDLAAALMSINAVKGVEIGDGFDAATLTGEDNADEILAAPNEAGGPHIFGSNHAGGILGGISSGQPVVARFAVKPTSSILIPRRSVGRDGQPVEVITKGRHDPCVGIRAVPVGEAMVACVLADHLLRDRAQNGPR</sequence>
<gene>
    <name evidence="1" type="primary">aroC</name>
    <name type="ordered locus">GbCGDNIH1_0224</name>
</gene>
<keyword id="KW-0028">Amino-acid biosynthesis</keyword>
<keyword id="KW-0057">Aromatic amino acid biosynthesis</keyword>
<keyword id="KW-0274">FAD</keyword>
<keyword id="KW-0285">Flavoprotein</keyword>
<keyword id="KW-0288">FMN</keyword>
<keyword id="KW-0456">Lyase</keyword>
<keyword id="KW-0521">NADP</keyword>
<keyword id="KW-1185">Reference proteome</keyword>
<dbReference type="EC" id="4.2.3.5" evidence="1"/>
<dbReference type="EMBL" id="CP000394">
    <property type="protein sequence ID" value="ABI61122.1"/>
    <property type="status" value="ALT_INIT"/>
    <property type="molecule type" value="Genomic_DNA"/>
</dbReference>
<dbReference type="RefSeq" id="WP_011630932.1">
    <property type="nucleotide sequence ID" value="NC_008343.2"/>
</dbReference>
<dbReference type="SMR" id="Q0BVN0"/>
<dbReference type="STRING" id="391165.GbCGDNIH1_0224"/>
<dbReference type="GeneID" id="69744476"/>
<dbReference type="KEGG" id="gbe:GbCGDNIH1_0224"/>
<dbReference type="eggNOG" id="COG0082">
    <property type="taxonomic scope" value="Bacteria"/>
</dbReference>
<dbReference type="HOGENOM" id="CLU_034547_0_0_5"/>
<dbReference type="OrthoDB" id="9771806at2"/>
<dbReference type="UniPathway" id="UPA00053">
    <property type="reaction ID" value="UER00090"/>
</dbReference>
<dbReference type="Proteomes" id="UP000001963">
    <property type="component" value="Chromosome"/>
</dbReference>
<dbReference type="GO" id="GO:0005829">
    <property type="term" value="C:cytosol"/>
    <property type="evidence" value="ECO:0007669"/>
    <property type="project" value="TreeGrafter"/>
</dbReference>
<dbReference type="GO" id="GO:0004107">
    <property type="term" value="F:chorismate synthase activity"/>
    <property type="evidence" value="ECO:0007669"/>
    <property type="project" value="UniProtKB-UniRule"/>
</dbReference>
<dbReference type="GO" id="GO:0010181">
    <property type="term" value="F:FMN binding"/>
    <property type="evidence" value="ECO:0007669"/>
    <property type="project" value="TreeGrafter"/>
</dbReference>
<dbReference type="GO" id="GO:0008652">
    <property type="term" value="P:amino acid biosynthetic process"/>
    <property type="evidence" value="ECO:0007669"/>
    <property type="project" value="UniProtKB-KW"/>
</dbReference>
<dbReference type="GO" id="GO:0009073">
    <property type="term" value="P:aromatic amino acid family biosynthetic process"/>
    <property type="evidence" value="ECO:0007669"/>
    <property type="project" value="UniProtKB-KW"/>
</dbReference>
<dbReference type="GO" id="GO:0009423">
    <property type="term" value="P:chorismate biosynthetic process"/>
    <property type="evidence" value="ECO:0007669"/>
    <property type="project" value="UniProtKB-UniRule"/>
</dbReference>
<dbReference type="CDD" id="cd07304">
    <property type="entry name" value="Chorismate_synthase"/>
    <property type="match status" value="1"/>
</dbReference>
<dbReference type="Gene3D" id="3.60.150.10">
    <property type="entry name" value="Chorismate synthase AroC"/>
    <property type="match status" value="1"/>
</dbReference>
<dbReference type="HAMAP" id="MF_00300">
    <property type="entry name" value="Chorismate_synth"/>
    <property type="match status" value="1"/>
</dbReference>
<dbReference type="InterPro" id="IPR000453">
    <property type="entry name" value="Chorismate_synth"/>
</dbReference>
<dbReference type="InterPro" id="IPR035904">
    <property type="entry name" value="Chorismate_synth_AroC_sf"/>
</dbReference>
<dbReference type="InterPro" id="IPR020541">
    <property type="entry name" value="Chorismate_synthase_CS"/>
</dbReference>
<dbReference type="NCBIfam" id="TIGR00033">
    <property type="entry name" value="aroC"/>
    <property type="match status" value="1"/>
</dbReference>
<dbReference type="NCBIfam" id="NF003793">
    <property type="entry name" value="PRK05382.1"/>
    <property type="match status" value="1"/>
</dbReference>
<dbReference type="PANTHER" id="PTHR21085">
    <property type="entry name" value="CHORISMATE SYNTHASE"/>
    <property type="match status" value="1"/>
</dbReference>
<dbReference type="PANTHER" id="PTHR21085:SF0">
    <property type="entry name" value="CHORISMATE SYNTHASE"/>
    <property type="match status" value="1"/>
</dbReference>
<dbReference type="Pfam" id="PF01264">
    <property type="entry name" value="Chorismate_synt"/>
    <property type="match status" value="1"/>
</dbReference>
<dbReference type="PIRSF" id="PIRSF001456">
    <property type="entry name" value="Chorismate_synth"/>
    <property type="match status" value="1"/>
</dbReference>
<dbReference type="SUPFAM" id="SSF103263">
    <property type="entry name" value="Chorismate synthase, AroC"/>
    <property type="match status" value="1"/>
</dbReference>
<dbReference type="PROSITE" id="PS00787">
    <property type="entry name" value="CHORISMATE_SYNTHASE_1"/>
    <property type="match status" value="1"/>
</dbReference>
<dbReference type="PROSITE" id="PS00789">
    <property type="entry name" value="CHORISMATE_SYNTHASE_3"/>
    <property type="match status" value="1"/>
</dbReference>
<feature type="chain" id="PRO_0000322404" description="Chorismate synthase">
    <location>
        <begin position="1"/>
        <end position="362"/>
    </location>
</feature>
<feature type="binding site" evidence="1">
    <location>
        <position position="48"/>
    </location>
    <ligand>
        <name>NADP(+)</name>
        <dbReference type="ChEBI" id="CHEBI:58349"/>
    </ligand>
</feature>
<feature type="binding site" evidence="1">
    <location>
        <position position="54"/>
    </location>
    <ligand>
        <name>NADP(+)</name>
        <dbReference type="ChEBI" id="CHEBI:58349"/>
    </ligand>
</feature>
<feature type="binding site" evidence="1">
    <location>
        <begin position="125"/>
        <end position="127"/>
    </location>
    <ligand>
        <name>FMN</name>
        <dbReference type="ChEBI" id="CHEBI:58210"/>
    </ligand>
</feature>
<feature type="binding site" evidence="1">
    <location>
        <begin position="238"/>
        <end position="239"/>
    </location>
    <ligand>
        <name>FMN</name>
        <dbReference type="ChEBI" id="CHEBI:58210"/>
    </ligand>
</feature>
<feature type="binding site" evidence="1">
    <location>
        <position position="286"/>
    </location>
    <ligand>
        <name>FMN</name>
        <dbReference type="ChEBI" id="CHEBI:58210"/>
    </ligand>
</feature>
<feature type="binding site" evidence="1">
    <location>
        <begin position="301"/>
        <end position="305"/>
    </location>
    <ligand>
        <name>FMN</name>
        <dbReference type="ChEBI" id="CHEBI:58210"/>
    </ligand>
</feature>
<feature type="binding site" evidence="1">
    <location>
        <position position="327"/>
    </location>
    <ligand>
        <name>FMN</name>
        <dbReference type="ChEBI" id="CHEBI:58210"/>
    </ligand>
</feature>
<organism>
    <name type="scientific">Granulibacter bethesdensis (strain ATCC BAA-1260 / CGDNIH1)</name>
    <dbReference type="NCBI Taxonomy" id="391165"/>
    <lineage>
        <taxon>Bacteria</taxon>
        <taxon>Pseudomonadati</taxon>
        <taxon>Pseudomonadota</taxon>
        <taxon>Alphaproteobacteria</taxon>
        <taxon>Acetobacterales</taxon>
        <taxon>Acetobacteraceae</taxon>
        <taxon>Granulibacter</taxon>
    </lineage>
</organism>